<accession>P06800</accession>
<accession>E9QLT5</accession>
<accession>Q61812</accession>
<accession>Q61813</accession>
<accession>Q61814</accession>
<accession>Q61815</accession>
<accession>Q78EF1</accession>
<accession>S4R1S4</accession>
<accession>S4R2V1</accession>
<proteinExistence type="evidence at protein level"/>
<organism>
    <name type="scientific">Mus musculus</name>
    <name type="common">Mouse</name>
    <dbReference type="NCBI Taxonomy" id="10090"/>
    <lineage>
        <taxon>Eukaryota</taxon>
        <taxon>Metazoa</taxon>
        <taxon>Chordata</taxon>
        <taxon>Craniata</taxon>
        <taxon>Vertebrata</taxon>
        <taxon>Euteleostomi</taxon>
        <taxon>Mammalia</taxon>
        <taxon>Eutheria</taxon>
        <taxon>Euarchontoglires</taxon>
        <taxon>Glires</taxon>
        <taxon>Rodentia</taxon>
        <taxon>Myomorpha</taxon>
        <taxon>Muroidea</taxon>
        <taxon>Muridae</taxon>
        <taxon>Murinae</taxon>
        <taxon>Mus</taxon>
        <taxon>Mus</taxon>
    </lineage>
</organism>
<keyword id="KW-0025">Alternative splicing</keyword>
<keyword id="KW-1003">Cell membrane</keyword>
<keyword id="KW-0903">Direct protein sequencing</keyword>
<keyword id="KW-0325">Glycoprotein</keyword>
<keyword id="KW-0378">Hydrolase</keyword>
<keyword id="KW-0472">Membrane</keyword>
<keyword id="KW-0597">Phosphoprotein</keyword>
<keyword id="KW-0904">Protein phosphatase</keyword>
<keyword id="KW-1185">Reference proteome</keyword>
<keyword id="KW-0677">Repeat</keyword>
<keyword id="KW-0732">Signal</keyword>
<keyword id="KW-0770">Synapse</keyword>
<keyword id="KW-0812">Transmembrane</keyword>
<keyword id="KW-1133">Transmembrane helix</keyword>
<protein>
    <recommendedName>
        <fullName evidence="11">Receptor-type tyrosine-protein phosphatase C</fullName>
        <ecNumber>3.1.3.48</ecNumber>
    </recommendedName>
    <alternativeName>
        <fullName>Leukocyte common antigen</fullName>
        <shortName>L-CA</shortName>
    </alternativeName>
    <alternativeName>
        <fullName>Lymphocyte antigen 5</fullName>
        <shortName>Ly-5</shortName>
    </alternativeName>
    <alternativeName>
        <fullName>T200</fullName>
    </alternativeName>
    <cdAntigenName>CD45</cdAntigenName>
</protein>
<reference key="1">
    <citation type="journal article" date="1986" name="Proc. Natl. Acad. Sci. U.S.A.">
        <title>Sequences of Ly-5 cDNA: isoform-related diversity of Ly-5 mRNA.</title>
        <authorList>
            <person name="Saga Y."/>
            <person name="Tung J.-S."/>
            <person name="Shen F.-W."/>
            <person name="Boyse E.A."/>
        </authorList>
    </citation>
    <scope>NUCLEOTIDE SEQUENCE [MRNA] (ISOFORM 3)</scope>
</reference>
<reference key="2">
    <citation type="journal article" date="1987" name="Proc. Natl. Acad. Sci. U.S.A.">
        <authorList>
            <person name="Saga Y."/>
            <person name="Tung J.-S."/>
            <person name="Shen F.-W."/>
            <person name="Boyse E.A."/>
        </authorList>
    </citation>
    <scope>ERRATUM OF PUBMED:2944116</scope>
    <scope>SEQUENCE REVISION</scope>
</reference>
<reference key="3">
    <citation type="journal article" date="1991" name="Dev. Immunol.">
        <title>Comparison of mouse Ly5a and Ly5b leucocyte common antigen alleles.</title>
        <authorList>
            <person name="Zebedee S.L."/>
            <person name="Barritt D.S."/>
            <person name="Raschke W.C."/>
        </authorList>
    </citation>
    <scope>NUCLEOTIDE SEQUENCE [MRNA] (ISOFORM 1)</scope>
    <source>
        <strain>BALB/cJ</strain>
    </source>
</reference>
<reference key="4">
    <citation type="journal article" date="2009" name="PLoS Biol.">
        <title>Lineage-specific biology revealed by a finished genome assembly of the mouse.</title>
        <authorList>
            <person name="Church D.M."/>
            <person name="Goodstadt L."/>
            <person name="Hillier L.W."/>
            <person name="Zody M.C."/>
            <person name="Goldstein S."/>
            <person name="She X."/>
            <person name="Bult C.J."/>
            <person name="Agarwala R."/>
            <person name="Cherry J.L."/>
            <person name="DiCuccio M."/>
            <person name="Hlavina W."/>
            <person name="Kapustin Y."/>
            <person name="Meric P."/>
            <person name="Maglott D."/>
            <person name="Birtle Z."/>
            <person name="Marques A.C."/>
            <person name="Graves T."/>
            <person name="Zhou S."/>
            <person name="Teague B."/>
            <person name="Potamousis K."/>
            <person name="Churas C."/>
            <person name="Place M."/>
            <person name="Herschleb J."/>
            <person name="Runnheim R."/>
            <person name="Forrest D."/>
            <person name="Amos-Landgraf J."/>
            <person name="Schwartz D.C."/>
            <person name="Cheng Z."/>
            <person name="Lindblad-Toh K."/>
            <person name="Eichler E.E."/>
            <person name="Ponting C.P."/>
        </authorList>
    </citation>
    <scope>NUCLEOTIDE SEQUENCE [LARGE SCALE GENOMIC DNA]</scope>
    <source>
        <strain>C57BL/6J</strain>
    </source>
</reference>
<reference key="5">
    <citation type="submission" date="2005-09" db="EMBL/GenBank/DDBJ databases">
        <authorList>
            <person name="Mural R.J."/>
            <person name="Adams M.D."/>
            <person name="Myers E.W."/>
            <person name="Smith H.O."/>
            <person name="Venter J.C."/>
        </authorList>
    </citation>
    <scope>NUCLEOTIDE SEQUENCE [LARGE SCALE GENOMIC DNA]</scope>
</reference>
<reference key="6">
    <citation type="journal article" date="1987" name="Proc. Natl. Acad. Sci. U.S.A.">
        <title>Alternative use of 5' exons in the specification of Ly-5 isoforms distinguishing hematopoietic cell lineages.</title>
        <authorList>
            <person name="Saga Y."/>
            <person name="Tung J.-S."/>
            <person name="Shen F.-W.W."/>
            <person name="Boyse E.A."/>
        </authorList>
    </citation>
    <scope>NUCLEOTIDE SEQUENCE [MRNA] OF 1-228 (ISOFORM 2)</scope>
</reference>
<reference key="7">
    <citation type="journal article" date="1988" name="Mol. Cell. Biol.">
        <title>Organization of the Ly-5 gene.</title>
        <authorList>
            <person name="Saga Y."/>
            <person name="Tung J.-S."/>
            <person name="Shen F.-W.W."/>
            <person name="Pancoast T.C."/>
            <person name="Boyse E.A."/>
        </authorList>
    </citation>
    <scope>NUCLEOTIDE SEQUENCE [GENOMIC DNA] OF 1-24</scope>
</reference>
<reference key="8">
    <citation type="journal article" date="1989" name="J. Biol. Chem.">
        <title>Sequence conservation in potential regulatory regions of the mouse and human leukocyte common antigen gene.</title>
        <authorList>
            <person name="Johnson N.A."/>
            <person name="Meyer C.M."/>
            <person name="Pingel J.T."/>
            <person name="Thomas M.L."/>
        </authorList>
    </citation>
    <scope>NUCLEOTIDE SEQUENCE [GENOMIC DNA] OF 1-24</scope>
</reference>
<reference key="9">
    <citation type="journal article" date="1985" name="Proc. Natl. Acad. Sci. U.S.A.">
        <title>Cloning of Ly-5 cDNA.</title>
        <authorList>
            <person name="Shen F.-W."/>
            <person name="Saga Y."/>
            <person name="Litman G."/>
            <person name="Freeman G."/>
            <person name="Tung J.-S."/>
            <person name="Cantor H."/>
            <person name="Boyse E.A."/>
        </authorList>
    </citation>
    <scope>NUCLEOTIDE SEQUENCE [MRNA] OF 12-265 (ISOFORM 3)</scope>
    <source>
        <tissue>T-cell</tissue>
    </source>
</reference>
<reference key="10">
    <citation type="journal article" date="1988" name="Immunogenetics">
        <title>Structural features of Ly-5 glycoproteins of the mouse and counterparts in other mammals.</title>
        <authorList>
            <person name="Tung J.-S."/>
            <person name="Saga Y."/>
            <person name="Boyse E.A."/>
        </authorList>
    </citation>
    <scope>NUCLEOTIDE SEQUENCE [GENOMIC DNA] OF 34-75</scope>
</reference>
<reference key="11">
    <citation type="journal article" date="1991" name="Blood">
        <title>Identification of novel protein tyrosine phosphatases of hematopoietic cells by polymerase chain reaction amplification.</title>
        <authorList>
            <person name="Yi T."/>
            <person name="Cleveland J.L."/>
            <person name="Ihle J.N."/>
        </authorList>
    </citation>
    <scope>NUCLEOTIDE SEQUENCE [MRNA] OF 732-840</scope>
</reference>
<reference key="12">
    <citation type="journal article" date="1987" name="Proc. Natl. Acad. Sci. U.S.A.">
        <title>Cloned murine T200 (Ly-5) cDNA reveals multiple transcripts within B- and T-lymphocyte lineages.</title>
        <authorList>
            <person name="Raschke W.C."/>
        </authorList>
    </citation>
    <scope>NUCLEOTIDE SEQUENCE [MRNA] OF 966-1293</scope>
</reference>
<reference key="13">
    <citation type="journal article" date="1987" name="Immunogenetics">
        <title>High sequence conservation between rat (T200) and mouse (Ly-5) leukocyte common antigens.</title>
        <authorList>
            <person name="Gonez L.J."/>
            <person name="Walker I.D."/>
            <person name="Sandrin M.S."/>
            <person name="McKenzie I.F."/>
        </authorList>
    </citation>
    <scope>PARTIAL PROTEIN SEQUENCE</scope>
</reference>
<reference key="14">
    <citation type="journal article" date="1997" name="J. Biol. Chem.">
        <title>Identification of the CD45-associated 116-kDa and 80-kDa proteins as the alpha- and beta-subunits of alpha-glucosidase II.</title>
        <authorList>
            <person name="Arendt C.W."/>
            <person name="Ostergaard H.L."/>
        </authorList>
    </citation>
    <scope>INTERACTION WITH GANAB AND PRKCSH</scope>
</reference>
<reference key="15">
    <citation type="journal article" date="1999" name="J. Immunol.">
        <title>CD45 negatively regulates lyn activity by dephosphorylating both positive and negative regulatory tyrosine residues in immature B cells.</title>
        <authorList>
            <person name="Katagiri T."/>
            <person name="Ogimoto M."/>
            <person name="Hasegawa K."/>
            <person name="Arimura Y."/>
            <person name="Mitomo K."/>
            <person name="Okada M."/>
            <person name="Clark M.R."/>
            <person name="Mizuno K."/>
            <person name="Yakura H."/>
        </authorList>
    </citation>
    <scope>FUNCTION</scope>
</reference>
<reference key="16">
    <citation type="journal article" date="2009" name="Immunity">
        <title>The phagosomal proteome in interferon-gamma-activated macrophages.</title>
        <authorList>
            <person name="Trost M."/>
            <person name="English L."/>
            <person name="Lemieux S."/>
            <person name="Courcelles M."/>
            <person name="Desjardins M."/>
            <person name="Thibault P."/>
        </authorList>
    </citation>
    <scope>PHOSPHORYLATION [LARGE SCALE ANALYSIS] AT SER-964</scope>
    <scope>IDENTIFICATION BY MASS SPECTROMETRY [LARGE SCALE ANALYSIS]</scope>
</reference>
<reference key="17">
    <citation type="journal article" date="2010" name="Cell">
        <title>A tissue-specific atlas of mouse protein phosphorylation and expression.</title>
        <authorList>
            <person name="Huttlin E.L."/>
            <person name="Jedrychowski M.P."/>
            <person name="Elias J.E."/>
            <person name="Goswami T."/>
            <person name="Rad R."/>
            <person name="Beausoleil S.A."/>
            <person name="Villen J."/>
            <person name="Haas W."/>
            <person name="Sowa M.E."/>
            <person name="Gygi S.P."/>
        </authorList>
    </citation>
    <scope>PHOSPHORYLATION [LARGE SCALE ANALYSIS] AT SER-964; SER-994; THR-1267 AND SER-1286</scope>
    <scope>IDENTIFICATION BY MASS SPECTROMETRY [LARGE SCALE ANALYSIS]</scope>
    <source>
        <tissue>Brain</tissue>
        <tissue>Brown adipose tissue</tissue>
        <tissue>Heart</tissue>
        <tissue>Kidney</tissue>
        <tissue>Liver</tissue>
        <tissue>Lung</tissue>
        <tissue>Pancreas</tissue>
        <tissue>Spleen</tissue>
        <tissue>Testis</tissue>
    </source>
</reference>
<evidence type="ECO:0000250" key="1"/>
<evidence type="ECO:0000250" key="2">
    <source>
        <dbReference type="UniProtKB" id="P04157"/>
    </source>
</evidence>
<evidence type="ECO:0000250" key="3">
    <source>
        <dbReference type="UniProtKB" id="P08575"/>
    </source>
</evidence>
<evidence type="ECO:0000255" key="4"/>
<evidence type="ECO:0000255" key="5">
    <source>
        <dbReference type="PROSITE-ProRule" id="PRU00160"/>
    </source>
</evidence>
<evidence type="ECO:0000255" key="6">
    <source>
        <dbReference type="PROSITE-ProRule" id="PRU00316"/>
    </source>
</evidence>
<evidence type="ECO:0000255" key="7">
    <source>
        <dbReference type="PROSITE-ProRule" id="PRU10044"/>
    </source>
</evidence>
<evidence type="ECO:0000256" key="8">
    <source>
        <dbReference type="SAM" id="MobiDB-lite"/>
    </source>
</evidence>
<evidence type="ECO:0000269" key="9">
    <source>
    </source>
</evidence>
<evidence type="ECO:0000269" key="10">
    <source>
    </source>
</evidence>
<evidence type="ECO:0000305" key="11"/>
<evidence type="ECO:0000312" key="12">
    <source>
        <dbReference type="MGI" id="MGI:97810"/>
    </source>
</evidence>
<evidence type="ECO:0007744" key="13">
    <source>
    </source>
</evidence>
<evidence type="ECO:0007744" key="14">
    <source>
    </source>
</evidence>
<gene>
    <name evidence="12" type="primary">Ptprc</name>
    <name type="synonym">Ly-5</name>
</gene>
<sequence length="1293" mass="144837">MTMGLWLKLLAFGFALLDTEVFVTGQTPTPSDELSTTENALLLPQSDPLPARTTESTPPSISERGNGSSETTYHPGVLSTLLPHLSPQPDSQTPSAGGADTQTFSSQADNPTLTPAPGGGTDPPGVPGERTVPGTIPADTAFPVDTPSLARNSSAASPTHTSNVSTTDISSGASLTTLTPSTLGLASTDPPSTTIATTTKQTCAAMFGNITVNYTYESSNQTFKADLKDVQNAKCGNEDCENVLNNLEECSQIKNISVSNDSCAPATTIDLYVPPGTDKFSLHDCTPKEKANTSICLEWKTKNLDFRKCNSDNISYVLHCEPENNTKCIRRNTFIPERCQLDNLRAQTNYTCVAEILYRGVKLVKNVINVQTDLGIPETPKPSCGDPAARKTLVSWPEPVSKPESASKPHGYVLCYKNNSEKCKSLPNNVTSFEVESLKPYKYYEVSLLAYVNGKIQRNGTAEKCNFHTKADRPDKVNGMKTSRPTDNSINVTCGPPYETNGPKTFYILVVRSGGSFVTKYNKTNCQFYVDNLYYSTDYEFLVSFHNGVYEGDSVIRNESTNFNAKALIIFLVFLIIVTSIALLVVLYKIYDLRKKRSSNLDEQQELVERDDEKQLMDVEPIHSDILLETYKRKIADEGRLFLAEFQSIPRVFSKFPIKDARKPHNQNKNRYVDILPYDYNRVELSEINGDAGSTYINASYIDGFKEPRKYIAAQGPRDETVDDFWRMIWEQKATVIVMVTRCEEGNRNKCAEYWPSMEEGTRAFKDIVVTINDHKRCPDYIIQKLNVAHKKEKATGREVTHIQFTSWPDHGVPEDPHLLLKLRRRVNAFSNFFSGPIVVHCSAGVGRTGTYIGIDAMLEGLEAEGKVDVYGYVVKLRRQRCLMVQVEAQYILIHQALVEYNQFGETEVNLSELHSCLHNMKKRDPPSDPSPLEAEYQRLPSYRSWRTQHIGNQEENKKKNRNSNVVPYDFNRVPLKHELEMSKESEPESDESSDDDSDSEETSKYINASFVMSYWKPEMMIAAQGPLKETIGDFWQMIFQRKVKVIVMLTELVNGDQEVCAQYWGEGKQTYGDMEVEMKDTNRASAYTLRTFELRHSKRKEPRTVYQYQCTTWKGEELPAEPKDLVSMIQDLKQKLPKASPEGMKYHKHASILVHCRDGSQQTGLFCALFNLLESAETEDVVDVFQVVKSLRKARPGVVCSYEQYQFLYDIIASIYPAQNGQVKKTNSQDKIEFHNEVDGGKQDANCVRPDGPLNKAQEDSRGVGTPEPTNSAEEPEHAANGSASPAPTQSS</sequence>
<dbReference type="EC" id="3.1.3.48"/>
<dbReference type="EMBL" id="M14342">
    <property type="protein sequence ID" value="AAA39458.1"/>
    <property type="status" value="ALT_INIT"/>
    <property type="molecule type" value="mRNA"/>
</dbReference>
<dbReference type="EMBL" id="M92933">
    <property type="protein sequence ID" value="AAA39459.1"/>
    <property type="status" value="ALT_INIT"/>
    <property type="molecule type" value="mRNA"/>
</dbReference>
<dbReference type="EMBL" id="AC122903">
    <property type="status" value="NOT_ANNOTATED_CDS"/>
    <property type="molecule type" value="Genomic_DNA"/>
</dbReference>
<dbReference type="EMBL" id="AC159278">
    <property type="status" value="NOT_ANNOTATED_CDS"/>
    <property type="molecule type" value="Genomic_DNA"/>
</dbReference>
<dbReference type="EMBL" id="CH466520">
    <property type="protein sequence ID" value="EDL39542.1"/>
    <property type="molecule type" value="Genomic_DNA"/>
</dbReference>
<dbReference type="EMBL" id="M17320">
    <property type="protein sequence ID" value="AAA60449.1"/>
    <property type="status" value="ALT_INIT"/>
    <property type="molecule type" value="mRNA"/>
</dbReference>
<dbReference type="EMBL" id="M23354">
    <property type="protein sequence ID" value="AAA39462.1"/>
    <property type="molecule type" value="Genomic_DNA"/>
</dbReference>
<dbReference type="EMBL" id="M22456">
    <property type="protein sequence ID" value="AAB46374.1"/>
    <property type="status" value="ALT_INIT"/>
    <property type="molecule type" value="Genomic_DNA"/>
</dbReference>
<dbReference type="EMBL" id="M11934">
    <property type="protein sequence ID" value="AAA39461.1"/>
    <property type="molecule type" value="mRNA"/>
</dbReference>
<dbReference type="EMBL" id="M23241">
    <property type="protein sequence ID" value="AAA39460.1"/>
    <property type="molecule type" value="Genomic_DNA"/>
</dbReference>
<dbReference type="EMBL" id="M15174">
    <property type="protein sequence ID" value="AAA40161.1"/>
    <property type="status" value="ALT_SEQ"/>
    <property type="molecule type" value="mRNA"/>
</dbReference>
<dbReference type="CCDS" id="CCDS15330.2">
    <molecule id="P06800-6"/>
</dbReference>
<dbReference type="CCDS" id="CCDS48383.2">
    <molecule id="P06800-4"/>
</dbReference>
<dbReference type="PIR" id="A23329">
    <property type="entry name" value="A23329"/>
</dbReference>
<dbReference type="PIR" id="A28334">
    <property type="entry name" value="A28334"/>
</dbReference>
<dbReference type="PIR" id="A28335">
    <property type="entry name" value="A28335"/>
</dbReference>
<dbReference type="PIR" id="I57644">
    <property type="entry name" value="I57644"/>
</dbReference>
<dbReference type="RefSeq" id="NP_001104786.2">
    <molecule id="P06800-4"/>
    <property type="nucleotide sequence ID" value="NM_001111316.3"/>
</dbReference>
<dbReference type="RefSeq" id="NP_035340.3">
    <molecule id="P06800-6"/>
    <property type="nucleotide sequence ID" value="NM_011210.5"/>
</dbReference>
<dbReference type="RefSeq" id="XP_006529320.1">
    <property type="nucleotide sequence ID" value="XM_006529257.1"/>
</dbReference>
<dbReference type="RefSeq" id="XP_006529321.1">
    <molecule id="P06800-4"/>
    <property type="nucleotide sequence ID" value="XM_006529258.4"/>
</dbReference>
<dbReference type="RefSeq" id="XP_006529322.1">
    <molecule id="P06800-4"/>
    <property type="nucleotide sequence ID" value="XM_006529259.4"/>
</dbReference>
<dbReference type="RefSeq" id="XP_006529323.1">
    <molecule id="P06800-5"/>
    <property type="nucleotide sequence ID" value="XM_006529260.1"/>
</dbReference>
<dbReference type="SMR" id="P06800"/>
<dbReference type="FunCoup" id="P06800">
    <property type="interactions" value="832"/>
</dbReference>
<dbReference type="IntAct" id="P06800">
    <property type="interactions" value="12"/>
</dbReference>
<dbReference type="MINT" id="P06800"/>
<dbReference type="STRING" id="10090.ENSMUSP00000138350"/>
<dbReference type="GlyConnect" id="2666">
    <property type="glycosylation" value="1 N-Linked glycan (1 site)"/>
</dbReference>
<dbReference type="GlyCosmos" id="P06800">
    <property type="glycosylation" value="16 sites, No reported glycans"/>
</dbReference>
<dbReference type="GlyGen" id="P06800">
    <property type="glycosylation" value="18 sites, 7 N-linked glycans (7 sites)"/>
</dbReference>
<dbReference type="iPTMnet" id="P06800"/>
<dbReference type="PhosphoSitePlus" id="P06800"/>
<dbReference type="SwissPalm" id="P06800"/>
<dbReference type="jPOST" id="P06800"/>
<dbReference type="PaxDb" id="10090-ENSMUSP00000138350"/>
<dbReference type="PeptideAtlas" id="P06800"/>
<dbReference type="ProteomicsDB" id="301943">
    <molecule id="P06800-4"/>
</dbReference>
<dbReference type="ProteomicsDB" id="314731"/>
<dbReference type="ProteomicsDB" id="337221"/>
<dbReference type="ABCD" id="P06800">
    <property type="antibodies" value="2 sequenced antibodies"/>
</dbReference>
<dbReference type="Antibodypedia" id="737">
    <property type="antibodies" value="10495 antibodies from 56 providers"/>
</dbReference>
<dbReference type="DNASU" id="19264"/>
<dbReference type="Ensembl" id="ENSMUST00000182283.8">
    <molecule id="P06800-6"/>
    <property type="protein sequence ID" value="ENSMUSP00000138800.2"/>
    <property type="gene ID" value="ENSMUSG00000026395.17"/>
</dbReference>
<dbReference type="Ensembl" id="ENSMUST00000183301.8">
    <molecule id="P06800-4"/>
    <property type="protein sequence ID" value="ENSMUSP00000138350.2"/>
    <property type="gene ID" value="ENSMUSG00000026395.17"/>
</dbReference>
<dbReference type="GeneID" id="19264"/>
<dbReference type="KEGG" id="mmu:19264"/>
<dbReference type="UCSC" id="uc007cvf.3">
    <molecule id="P06800-4"/>
    <property type="organism name" value="mouse"/>
</dbReference>
<dbReference type="UCSC" id="uc007cvh.3">
    <property type="organism name" value="mouse"/>
</dbReference>
<dbReference type="AGR" id="MGI:97810"/>
<dbReference type="CTD" id="5788"/>
<dbReference type="MGI" id="MGI:97810">
    <property type="gene designation" value="Ptprc"/>
</dbReference>
<dbReference type="VEuPathDB" id="HostDB:ENSMUSG00000026395"/>
<dbReference type="eggNOG" id="KOG4228">
    <property type="taxonomic scope" value="Eukaryota"/>
</dbReference>
<dbReference type="GeneTree" id="ENSGT00940000159457"/>
<dbReference type="InParanoid" id="P06800"/>
<dbReference type="OMA" id="ILHYIIH"/>
<dbReference type="OrthoDB" id="5794147at2759"/>
<dbReference type="TreeFam" id="TF351829"/>
<dbReference type="Reactome" id="R-MMU-202427">
    <property type="pathway name" value="Phosphorylation of CD3 and TCR zeta chains"/>
</dbReference>
<dbReference type="Reactome" id="R-MMU-416700">
    <property type="pathway name" value="Other semaphorin interactions"/>
</dbReference>
<dbReference type="Reactome" id="R-MMU-6798695">
    <property type="pathway name" value="Neutrophil degranulation"/>
</dbReference>
<dbReference type="SABIO-RK" id="P06800"/>
<dbReference type="BioGRID-ORCS" id="19264">
    <property type="hits" value="3 hits in 115 CRISPR screens"/>
</dbReference>
<dbReference type="ChiTaRS" id="Ptprc">
    <property type="organism name" value="mouse"/>
</dbReference>
<dbReference type="PRO" id="PR:P06800"/>
<dbReference type="Proteomes" id="UP000000589">
    <property type="component" value="Chromosome 1"/>
</dbReference>
<dbReference type="RNAct" id="P06800">
    <property type="molecule type" value="protein"/>
</dbReference>
<dbReference type="Bgee" id="ENSMUSG00000026395">
    <property type="expression patterns" value="Expressed in peripheral lymph node and 178 other cell types or tissues"/>
</dbReference>
<dbReference type="ExpressionAtlas" id="P06800">
    <property type="expression patterns" value="baseline and differential"/>
</dbReference>
<dbReference type="GO" id="GO:0032059">
    <property type="term" value="C:bleb"/>
    <property type="evidence" value="ECO:0007669"/>
    <property type="project" value="Ensembl"/>
</dbReference>
<dbReference type="GO" id="GO:0071944">
    <property type="term" value="C:cell periphery"/>
    <property type="evidence" value="ECO:0000314"/>
    <property type="project" value="MGI"/>
</dbReference>
<dbReference type="GO" id="GO:0009986">
    <property type="term" value="C:cell surface"/>
    <property type="evidence" value="ECO:0000314"/>
    <property type="project" value="MGI"/>
</dbReference>
<dbReference type="GO" id="GO:0009898">
    <property type="term" value="C:cytoplasmic side of plasma membrane"/>
    <property type="evidence" value="ECO:0000303"/>
    <property type="project" value="ARUK-UCL"/>
</dbReference>
<dbReference type="GO" id="GO:0009897">
    <property type="term" value="C:external side of plasma membrane"/>
    <property type="evidence" value="ECO:0000314"/>
    <property type="project" value="MGI"/>
</dbReference>
<dbReference type="GO" id="GO:0005925">
    <property type="term" value="C:focal adhesion"/>
    <property type="evidence" value="ECO:0000314"/>
    <property type="project" value="UniProtKB"/>
</dbReference>
<dbReference type="GO" id="GO:0098857">
    <property type="term" value="C:membrane microdomain"/>
    <property type="evidence" value="ECO:0000314"/>
    <property type="project" value="ARUK-UCL"/>
</dbReference>
<dbReference type="GO" id="GO:0045121">
    <property type="term" value="C:membrane raft"/>
    <property type="evidence" value="ECO:0000314"/>
    <property type="project" value="ARUK-UCL"/>
</dbReference>
<dbReference type="GO" id="GO:0005886">
    <property type="term" value="C:plasma membrane"/>
    <property type="evidence" value="ECO:0000314"/>
    <property type="project" value="MGI"/>
</dbReference>
<dbReference type="GO" id="GO:0045202">
    <property type="term" value="C:synapse"/>
    <property type="evidence" value="ECO:0007669"/>
    <property type="project" value="UniProtKB-SubCell"/>
</dbReference>
<dbReference type="GO" id="GO:0030506">
    <property type="term" value="F:ankyrin binding"/>
    <property type="evidence" value="ECO:0007669"/>
    <property type="project" value="Ensembl"/>
</dbReference>
<dbReference type="GO" id="GO:0043395">
    <property type="term" value="F:heparan sulfate proteoglycan binding"/>
    <property type="evidence" value="ECO:0000314"/>
    <property type="project" value="MGI"/>
</dbReference>
<dbReference type="GO" id="GO:0008201">
    <property type="term" value="F:heparin binding"/>
    <property type="evidence" value="ECO:0000314"/>
    <property type="project" value="MGI"/>
</dbReference>
<dbReference type="GO" id="GO:0019901">
    <property type="term" value="F:protein kinase binding"/>
    <property type="evidence" value="ECO:0000353"/>
    <property type="project" value="UniProtKB"/>
</dbReference>
<dbReference type="GO" id="GO:0030292">
    <property type="term" value="F:protein tyrosine kinase inhibitor activity"/>
    <property type="evidence" value="ECO:0007669"/>
    <property type="project" value="Ensembl"/>
</dbReference>
<dbReference type="GO" id="GO:0004725">
    <property type="term" value="F:protein tyrosine phosphatase activity"/>
    <property type="evidence" value="ECO:0000314"/>
    <property type="project" value="ARUK-UCL"/>
</dbReference>
<dbReference type="GO" id="GO:0005102">
    <property type="term" value="F:signaling receptor binding"/>
    <property type="evidence" value="ECO:0000353"/>
    <property type="project" value="ARUK-UCL"/>
</dbReference>
<dbReference type="GO" id="GO:0030507">
    <property type="term" value="F:spectrin binding"/>
    <property type="evidence" value="ECO:0007669"/>
    <property type="project" value="Ensembl"/>
</dbReference>
<dbReference type="GO" id="GO:0005001">
    <property type="term" value="F:transmembrane receptor protein tyrosine phosphatase activity"/>
    <property type="evidence" value="ECO:0007669"/>
    <property type="project" value="Ensembl"/>
</dbReference>
<dbReference type="GO" id="GO:0046633">
    <property type="term" value="P:alpha-beta T cell proliferation"/>
    <property type="evidence" value="ECO:0000315"/>
    <property type="project" value="MGI"/>
</dbReference>
<dbReference type="GO" id="GO:0030183">
    <property type="term" value="P:B cell differentiation"/>
    <property type="evidence" value="ECO:0000315"/>
    <property type="project" value="ARUK-UCL"/>
</dbReference>
<dbReference type="GO" id="GO:0042100">
    <property type="term" value="P:B cell proliferation"/>
    <property type="evidence" value="ECO:0000315"/>
    <property type="project" value="UniProtKB"/>
</dbReference>
<dbReference type="GO" id="GO:0050853">
    <property type="term" value="P:B cell receptor signaling pathway"/>
    <property type="evidence" value="ECO:0000315"/>
    <property type="project" value="UniProtKB"/>
</dbReference>
<dbReference type="GO" id="GO:0048539">
    <property type="term" value="P:bone marrow development"/>
    <property type="evidence" value="ECO:0007669"/>
    <property type="project" value="Ensembl"/>
</dbReference>
<dbReference type="GO" id="GO:0044770">
    <property type="term" value="P:cell cycle phase transition"/>
    <property type="evidence" value="ECO:0007669"/>
    <property type="project" value="Ensembl"/>
</dbReference>
<dbReference type="GO" id="GO:0051607">
    <property type="term" value="P:defense response to virus"/>
    <property type="evidence" value="ECO:0000314"/>
    <property type="project" value="MGI"/>
</dbReference>
<dbReference type="GO" id="GO:0016311">
    <property type="term" value="P:dephosphorylation"/>
    <property type="evidence" value="ECO:0000314"/>
    <property type="project" value="UniProtKB"/>
</dbReference>
<dbReference type="GO" id="GO:0097191">
    <property type="term" value="P:extrinsic apoptotic signaling pathway"/>
    <property type="evidence" value="ECO:0000315"/>
    <property type="project" value="MGI"/>
</dbReference>
<dbReference type="GO" id="GO:0042492">
    <property type="term" value="P:gamma-delta T cell differentiation"/>
    <property type="evidence" value="ECO:0000315"/>
    <property type="project" value="MGI"/>
</dbReference>
<dbReference type="GO" id="GO:0002244">
    <property type="term" value="P:hematopoietic progenitor cell differentiation"/>
    <property type="evidence" value="ECO:0007669"/>
    <property type="project" value="Ensembl"/>
</dbReference>
<dbReference type="GO" id="GO:0034113">
    <property type="term" value="P:heterotypic cell-cell adhesion"/>
    <property type="evidence" value="ECO:0000315"/>
    <property type="project" value="MGI"/>
</dbReference>
<dbReference type="GO" id="GO:0007159">
    <property type="term" value="P:leukocyte cell-cell adhesion"/>
    <property type="evidence" value="ECO:0000315"/>
    <property type="project" value="MGI"/>
</dbReference>
<dbReference type="GO" id="GO:0000165">
    <property type="term" value="P:MAPK cascade"/>
    <property type="evidence" value="ECO:0000315"/>
    <property type="project" value="MGI"/>
</dbReference>
<dbReference type="GO" id="GO:0001779">
    <property type="term" value="P:natural killer cell differentiation"/>
    <property type="evidence" value="ECO:0000315"/>
    <property type="project" value="ARUK-UCL"/>
</dbReference>
<dbReference type="GO" id="GO:0006933">
    <property type="term" value="P:negative regulation of cell adhesion involved in substrate-bound cell migration"/>
    <property type="evidence" value="ECO:0007669"/>
    <property type="project" value="Ensembl"/>
</dbReference>
<dbReference type="GO" id="GO:0001960">
    <property type="term" value="P:negative regulation of cytokine-mediated signaling pathway"/>
    <property type="evidence" value="ECO:0000314"/>
    <property type="project" value="UniProtKB"/>
</dbReference>
<dbReference type="GO" id="GO:0070373">
    <property type="term" value="P:negative regulation of ERK1 and ERK2 cascade"/>
    <property type="evidence" value="ECO:0000316"/>
    <property type="project" value="ARUK-UCL"/>
</dbReference>
<dbReference type="GO" id="GO:0032703">
    <property type="term" value="P:negative regulation of interleukin-2 production"/>
    <property type="evidence" value="ECO:0000316"/>
    <property type="project" value="ARUK-UCL"/>
</dbReference>
<dbReference type="GO" id="GO:1902215">
    <property type="term" value="P:negative regulation of interleukin-4-mediated signaling pathway"/>
    <property type="evidence" value="ECO:0007669"/>
    <property type="project" value="Ensembl"/>
</dbReference>
<dbReference type="GO" id="GO:0006469">
    <property type="term" value="P:negative regulation of protein kinase activity"/>
    <property type="evidence" value="ECO:0000314"/>
    <property type="project" value="UniProtKB"/>
</dbReference>
<dbReference type="GO" id="GO:0046426">
    <property type="term" value="P:negative regulation of receptor signaling pathway via JAK-STAT"/>
    <property type="evidence" value="ECO:0007669"/>
    <property type="project" value="Ensembl"/>
</dbReference>
<dbReference type="GO" id="GO:0001915">
    <property type="term" value="P:negative regulation of T cell mediated cytotoxicity"/>
    <property type="evidence" value="ECO:0000315"/>
    <property type="project" value="UniProtKB"/>
</dbReference>
<dbReference type="GO" id="GO:0000122">
    <property type="term" value="P:negative regulation of transcription by RNA polymerase II"/>
    <property type="evidence" value="ECO:0007669"/>
    <property type="project" value="Ensembl"/>
</dbReference>
<dbReference type="GO" id="GO:0045060">
    <property type="term" value="P:negative thymic T cell selection"/>
    <property type="evidence" value="ECO:0000315"/>
    <property type="project" value="MGI"/>
</dbReference>
<dbReference type="GO" id="GO:0044855">
    <property type="term" value="P:plasma membrane raft distribution"/>
    <property type="evidence" value="ECO:0000316"/>
    <property type="project" value="ARUK-UCL"/>
</dbReference>
<dbReference type="GO" id="GO:0046641">
    <property type="term" value="P:positive regulation of alpha-beta T cell proliferation"/>
    <property type="evidence" value="ECO:0000315"/>
    <property type="project" value="MGI"/>
</dbReference>
<dbReference type="GO" id="GO:0050857">
    <property type="term" value="P:positive regulation of antigen receptor-mediated signaling pathway"/>
    <property type="evidence" value="ECO:0000315"/>
    <property type="project" value="UniProtKB"/>
</dbReference>
<dbReference type="GO" id="GO:0030890">
    <property type="term" value="P:positive regulation of B cell proliferation"/>
    <property type="evidence" value="ECO:0000315"/>
    <property type="project" value="MGI"/>
</dbReference>
<dbReference type="GO" id="GO:0050850">
    <property type="term" value="P:positive regulation of calcium-mediated signaling"/>
    <property type="evidence" value="ECO:0000316"/>
    <property type="project" value="ARUK-UCL"/>
</dbReference>
<dbReference type="GO" id="GO:0070374">
    <property type="term" value="P:positive regulation of ERK1 and ERK2 cascade"/>
    <property type="evidence" value="ECO:0000316"/>
    <property type="project" value="ARUK-UCL"/>
</dbReference>
<dbReference type="GO" id="GO:2001238">
    <property type="term" value="P:positive regulation of extrinsic apoptotic signaling pathway"/>
    <property type="evidence" value="ECO:0000315"/>
    <property type="project" value="MGI"/>
</dbReference>
<dbReference type="GO" id="GO:0060369">
    <property type="term" value="P:positive regulation of Fc receptor mediated stimulatory signaling pathway"/>
    <property type="evidence" value="ECO:0000316"/>
    <property type="project" value="ARUK-UCL"/>
</dbReference>
<dbReference type="GO" id="GO:0045588">
    <property type="term" value="P:positive regulation of gamma-delta T cell differentiation"/>
    <property type="evidence" value="ECO:0000315"/>
    <property type="project" value="MGI"/>
</dbReference>
<dbReference type="GO" id="GO:2000473">
    <property type="term" value="P:positive regulation of hematopoietic stem cell migration"/>
    <property type="evidence" value="ECO:0007669"/>
    <property type="project" value="Ensembl"/>
</dbReference>
<dbReference type="GO" id="GO:0002925">
    <property type="term" value="P:positive regulation of humoral immune response mediated by circulating immunoglobulin"/>
    <property type="evidence" value="ECO:0000315"/>
    <property type="project" value="MGI"/>
</dbReference>
<dbReference type="GO" id="GO:0032743">
    <property type="term" value="P:positive regulation of interleukin-2 production"/>
    <property type="evidence" value="ECO:0000316"/>
    <property type="project" value="ARUK-UCL"/>
</dbReference>
<dbReference type="GO" id="GO:0048304">
    <property type="term" value="P:positive regulation of isotype switching to IgG isotypes"/>
    <property type="evidence" value="ECO:0000315"/>
    <property type="project" value="MGI"/>
</dbReference>
<dbReference type="GO" id="GO:0043410">
    <property type="term" value="P:positive regulation of MAPK cascade"/>
    <property type="evidence" value="ECO:0000315"/>
    <property type="project" value="MGI"/>
</dbReference>
<dbReference type="GO" id="GO:0050766">
    <property type="term" value="P:positive regulation of phagocytosis"/>
    <property type="evidence" value="ECO:0000316"/>
    <property type="project" value="ARUK-UCL"/>
</dbReference>
<dbReference type="GO" id="GO:2000648">
    <property type="term" value="P:positive regulation of stem cell proliferation"/>
    <property type="evidence" value="ECO:0007669"/>
    <property type="project" value="Ensembl"/>
</dbReference>
<dbReference type="GO" id="GO:0045582">
    <property type="term" value="P:positive regulation of T cell differentiation"/>
    <property type="evidence" value="ECO:0000315"/>
    <property type="project" value="MGI"/>
</dbReference>
<dbReference type="GO" id="GO:0001916">
    <property type="term" value="P:positive regulation of T cell mediated cytotoxicity"/>
    <property type="evidence" value="ECO:0000315"/>
    <property type="project" value="MGI"/>
</dbReference>
<dbReference type="GO" id="GO:0002711">
    <property type="term" value="P:positive regulation of T cell mediated immunity"/>
    <property type="evidence" value="ECO:0000315"/>
    <property type="project" value="MGI"/>
</dbReference>
<dbReference type="GO" id="GO:0042102">
    <property type="term" value="P:positive regulation of T cell proliferation"/>
    <property type="evidence" value="ECO:0000315"/>
    <property type="project" value="UniProtKB"/>
</dbReference>
<dbReference type="GO" id="GO:0032760">
    <property type="term" value="P:positive regulation of tumor necrosis factor production"/>
    <property type="evidence" value="ECO:0000316"/>
    <property type="project" value="ARUK-UCL"/>
</dbReference>
<dbReference type="GO" id="GO:0045059">
    <property type="term" value="P:positive thymic T cell selection"/>
    <property type="evidence" value="ECO:0000315"/>
    <property type="project" value="MGI"/>
</dbReference>
<dbReference type="GO" id="GO:0006470">
    <property type="term" value="P:protein dephosphorylation"/>
    <property type="evidence" value="ECO:0000314"/>
    <property type="project" value="UniProtKB"/>
</dbReference>
<dbReference type="GO" id="GO:0051726">
    <property type="term" value="P:regulation of cell cycle"/>
    <property type="evidence" value="ECO:0000314"/>
    <property type="project" value="UniProtKB"/>
</dbReference>
<dbReference type="GO" id="GO:2001236">
    <property type="term" value="P:regulation of extrinsic apoptotic signaling pathway"/>
    <property type="evidence" value="ECO:0000315"/>
    <property type="project" value="MGI"/>
</dbReference>
<dbReference type="GO" id="GO:0010468">
    <property type="term" value="P:regulation of gene expression"/>
    <property type="evidence" value="ECO:0000316"/>
    <property type="project" value="ARUK-UCL"/>
</dbReference>
<dbReference type="GO" id="GO:0002923">
    <property type="term" value="P:regulation of humoral immune response mediated by circulating immunoglobulin"/>
    <property type="evidence" value="ECO:0000315"/>
    <property type="project" value="MGI"/>
</dbReference>
<dbReference type="GO" id="GO:0032677">
    <property type="term" value="P:regulation of interleukin-8 production"/>
    <property type="evidence" value="ECO:0007669"/>
    <property type="project" value="Ensembl"/>
</dbReference>
<dbReference type="GO" id="GO:0050856">
    <property type="term" value="P:regulation of T cell receptor signaling pathway"/>
    <property type="evidence" value="ECO:0000316"/>
    <property type="project" value="ARUK-UCL"/>
</dbReference>
<dbReference type="GO" id="GO:0051209">
    <property type="term" value="P:release of sequestered calcium ion into cytosol"/>
    <property type="evidence" value="ECO:0000314"/>
    <property type="project" value="UniProtKB"/>
</dbReference>
<dbReference type="GO" id="GO:0048864">
    <property type="term" value="P:stem cell development"/>
    <property type="evidence" value="ECO:0007669"/>
    <property type="project" value="Ensembl"/>
</dbReference>
<dbReference type="GO" id="GO:0030217">
    <property type="term" value="P:T cell differentiation"/>
    <property type="evidence" value="ECO:0000315"/>
    <property type="project" value="UniProtKB"/>
</dbReference>
<dbReference type="GO" id="GO:0042098">
    <property type="term" value="P:T cell proliferation"/>
    <property type="evidence" value="ECO:0000315"/>
    <property type="project" value="MGI"/>
</dbReference>
<dbReference type="GO" id="GO:0050852">
    <property type="term" value="P:T cell receptor signaling pathway"/>
    <property type="evidence" value="ECO:0000316"/>
    <property type="project" value="ARUK-UCL"/>
</dbReference>
<dbReference type="CDD" id="cd00063">
    <property type="entry name" value="FN3"/>
    <property type="match status" value="2"/>
</dbReference>
<dbReference type="CDD" id="cd14558">
    <property type="entry name" value="R-PTP-C-2"/>
    <property type="match status" value="1"/>
</dbReference>
<dbReference type="CDD" id="cd14557">
    <property type="entry name" value="R-PTPc-C-1"/>
    <property type="match status" value="1"/>
</dbReference>
<dbReference type="FunFam" id="2.60.40.10:FF:001462">
    <property type="entry name" value="Receptor-type tyrosine-protein phosphatase C"/>
    <property type="match status" value="1"/>
</dbReference>
<dbReference type="FunFam" id="3.90.190.10:FF:000033">
    <property type="entry name" value="receptor-type tyrosine-protein phosphatase C isoform X1"/>
    <property type="match status" value="1"/>
</dbReference>
<dbReference type="FunFam" id="3.90.190.10:FF:000042">
    <property type="entry name" value="receptor-type tyrosine-protein phosphatase C isoform X1"/>
    <property type="match status" value="1"/>
</dbReference>
<dbReference type="Gene3D" id="2.60.40.10">
    <property type="entry name" value="Immunoglobulins"/>
    <property type="match status" value="2"/>
</dbReference>
<dbReference type="Gene3D" id="3.90.190.10">
    <property type="entry name" value="Protein tyrosine phosphatase superfamily"/>
    <property type="match status" value="2"/>
</dbReference>
<dbReference type="InterPro" id="IPR003961">
    <property type="entry name" value="FN3_dom"/>
</dbReference>
<dbReference type="InterPro" id="IPR036116">
    <property type="entry name" value="FN3_sf"/>
</dbReference>
<dbReference type="InterPro" id="IPR013783">
    <property type="entry name" value="Ig-like_fold"/>
</dbReference>
<dbReference type="InterPro" id="IPR029021">
    <property type="entry name" value="Prot-tyrosine_phosphatase-like"/>
</dbReference>
<dbReference type="InterPro" id="IPR050348">
    <property type="entry name" value="Protein-Tyr_Phosphatase"/>
</dbReference>
<dbReference type="InterPro" id="IPR000242">
    <property type="entry name" value="PTP_cat"/>
</dbReference>
<dbReference type="InterPro" id="IPR024739">
    <property type="entry name" value="PTP_recept_N"/>
</dbReference>
<dbReference type="InterPro" id="IPR016335">
    <property type="entry name" value="Ptprc"/>
</dbReference>
<dbReference type="InterPro" id="IPR016130">
    <property type="entry name" value="Tyr_Pase_AS"/>
</dbReference>
<dbReference type="InterPro" id="IPR003595">
    <property type="entry name" value="Tyr_Pase_cat"/>
</dbReference>
<dbReference type="InterPro" id="IPR000387">
    <property type="entry name" value="Tyr_Pase_dom"/>
</dbReference>
<dbReference type="PANTHER" id="PTHR19134">
    <property type="entry name" value="RECEPTOR-TYPE TYROSINE-PROTEIN PHOSPHATASE"/>
    <property type="match status" value="1"/>
</dbReference>
<dbReference type="PANTHER" id="PTHR19134:SF539">
    <property type="entry name" value="RECEPTOR-TYPE TYROSINE-PROTEIN PHOSPHATASE C"/>
    <property type="match status" value="1"/>
</dbReference>
<dbReference type="Pfam" id="PF12567">
    <property type="entry name" value="CD45"/>
    <property type="match status" value="1"/>
</dbReference>
<dbReference type="Pfam" id="PF12453">
    <property type="entry name" value="PTP_N"/>
    <property type="match status" value="1"/>
</dbReference>
<dbReference type="Pfam" id="PF00102">
    <property type="entry name" value="Y_phosphatase"/>
    <property type="match status" value="2"/>
</dbReference>
<dbReference type="PIRSF" id="PIRSF002004">
    <property type="entry name" value="Leukocyte_common_antigen"/>
    <property type="match status" value="1"/>
</dbReference>
<dbReference type="PRINTS" id="PR00700">
    <property type="entry name" value="PRTYPHPHTASE"/>
</dbReference>
<dbReference type="SMART" id="SM00060">
    <property type="entry name" value="FN3"/>
    <property type="match status" value="2"/>
</dbReference>
<dbReference type="SMART" id="SM00194">
    <property type="entry name" value="PTPc"/>
    <property type="match status" value="2"/>
</dbReference>
<dbReference type="SMART" id="SM00404">
    <property type="entry name" value="PTPc_motif"/>
    <property type="match status" value="2"/>
</dbReference>
<dbReference type="SUPFAM" id="SSF52799">
    <property type="entry name" value="(Phosphotyrosine protein) phosphatases II"/>
    <property type="match status" value="2"/>
</dbReference>
<dbReference type="SUPFAM" id="SSF49265">
    <property type="entry name" value="Fibronectin type III"/>
    <property type="match status" value="2"/>
</dbReference>
<dbReference type="PROSITE" id="PS50853">
    <property type="entry name" value="FN3"/>
    <property type="match status" value="2"/>
</dbReference>
<dbReference type="PROSITE" id="PS00383">
    <property type="entry name" value="TYR_PHOSPHATASE_1"/>
    <property type="match status" value="1"/>
</dbReference>
<dbReference type="PROSITE" id="PS50056">
    <property type="entry name" value="TYR_PHOSPHATASE_2"/>
    <property type="match status" value="2"/>
</dbReference>
<dbReference type="PROSITE" id="PS50055">
    <property type="entry name" value="TYR_PHOSPHATASE_PTP"/>
    <property type="match status" value="2"/>
</dbReference>
<feature type="signal peptide">
    <location>
        <begin position="1"/>
        <end position="25"/>
    </location>
</feature>
<feature type="chain" id="PRO_0000025471" description="Receptor-type tyrosine-protein phosphatase C">
    <location>
        <begin position="26"/>
        <end position="1293"/>
    </location>
</feature>
<feature type="topological domain" description="Extracellular" evidence="4">
    <location>
        <begin position="26"/>
        <end position="566"/>
    </location>
</feature>
<feature type="transmembrane region" description="Helical" evidence="4">
    <location>
        <begin position="567"/>
        <end position="588"/>
    </location>
</feature>
<feature type="topological domain" description="Cytoplasmic" evidence="4">
    <location>
        <begin position="589"/>
        <end position="1293"/>
    </location>
</feature>
<feature type="domain" description="Fibronectin type-III 1" evidence="6">
    <location>
        <begin position="376"/>
        <end position="472"/>
    </location>
</feature>
<feature type="domain" description="Fibronectin type-III 2" evidence="6">
    <location>
        <begin position="473"/>
        <end position="568"/>
    </location>
</feature>
<feature type="domain" description="Tyrosine-protein phosphatase 1" evidence="5">
    <location>
        <begin position="642"/>
        <end position="901"/>
    </location>
</feature>
<feature type="domain" description="Tyrosine-protein phosphatase 2" evidence="5">
    <location>
        <begin position="933"/>
        <end position="1216"/>
    </location>
</feature>
<feature type="region of interest" description="Disordered" evidence="8">
    <location>
        <begin position="43"/>
        <end position="174"/>
    </location>
</feature>
<feature type="region of interest" description="Disordered" evidence="8">
    <location>
        <begin position="980"/>
        <end position="1003"/>
    </location>
</feature>
<feature type="region of interest" description="Disordered" evidence="8">
    <location>
        <begin position="1240"/>
        <end position="1293"/>
    </location>
</feature>
<feature type="compositionally biased region" description="Polar residues" evidence="8">
    <location>
        <begin position="53"/>
        <end position="72"/>
    </location>
</feature>
<feature type="compositionally biased region" description="Polar residues" evidence="8">
    <location>
        <begin position="88"/>
        <end position="110"/>
    </location>
</feature>
<feature type="compositionally biased region" description="Polar residues" evidence="8">
    <location>
        <begin position="149"/>
        <end position="169"/>
    </location>
</feature>
<feature type="compositionally biased region" description="Acidic residues" evidence="8">
    <location>
        <begin position="988"/>
        <end position="1001"/>
    </location>
</feature>
<feature type="compositionally biased region" description="Polar residues" evidence="8">
    <location>
        <begin position="1283"/>
        <end position="1293"/>
    </location>
</feature>
<feature type="active site" description="Phosphocysteine intermediate" evidence="1">
    <location>
        <position position="842"/>
    </location>
</feature>
<feature type="active site" description="Phosphocysteine intermediate" evidence="1">
    <location>
        <position position="1157"/>
    </location>
</feature>
<feature type="binding site" evidence="1">
    <location>
        <position position="810"/>
    </location>
    <ligand>
        <name>substrate</name>
    </ligand>
</feature>
<feature type="binding site" evidence="1">
    <location>
        <begin position="842"/>
        <end position="848"/>
    </location>
    <ligand>
        <name>substrate</name>
    </ligand>
</feature>
<feature type="binding site" evidence="1">
    <location>
        <position position="886"/>
    </location>
    <ligand>
        <name>substrate</name>
    </ligand>
</feature>
<feature type="modified residue" description="Phosphotyrosine" evidence="2">
    <location>
        <position position="672"/>
    </location>
</feature>
<feature type="modified residue" description="Phosphoserine" evidence="13 14">
    <location>
        <position position="964"/>
    </location>
</feature>
<feature type="modified residue" description="Phosphoserine" evidence="3">
    <location>
        <position position="983"/>
    </location>
</feature>
<feature type="modified residue" description="Phosphoserine" evidence="2">
    <location>
        <position position="986"/>
    </location>
</feature>
<feature type="modified residue" description="Phosphoserine" evidence="2">
    <location>
        <position position="990"/>
    </location>
</feature>
<feature type="modified residue" description="Phosphoserine" evidence="2">
    <location>
        <position position="993"/>
    </location>
</feature>
<feature type="modified residue" description="Phosphoserine" evidence="14">
    <location>
        <position position="994"/>
    </location>
</feature>
<feature type="modified residue" description="Phosphoserine" evidence="2">
    <location>
        <position position="998"/>
    </location>
</feature>
<feature type="modified residue" description="Phosphoserine" evidence="2">
    <location>
        <position position="1229"/>
    </location>
</feature>
<feature type="modified residue" description="Phosphothreonine" evidence="14">
    <location>
        <position position="1267"/>
    </location>
</feature>
<feature type="modified residue" description="Phosphoserine" evidence="14">
    <location>
        <position position="1286"/>
    </location>
</feature>
<feature type="glycosylation site" description="N-linked (GlcNAc...) asparagine" evidence="4">
    <location>
        <position position="66"/>
    </location>
</feature>
<feature type="glycosylation site" description="N-linked (GlcNAc...) asparagine" evidence="4">
    <location>
        <position position="152"/>
    </location>
</feature>
<feature type="glycosylation site" description="N-linked (GlcNAc...) asparagine" evidence="4">
    <location>
        <position position="163"/>
    </location>
</feature>
<feature type="glycosylation site" description="N-linked (GlcNAc...) asparagine" evidence="4">
    <location>
        <position position="209"/>
    </location>
</feature>
<feature type="glycosylation site" description="N-linked (GlcNAc...) asparagine" evidence="4">
    <location>
        <position position="213"/>
    </location>
</feature>
<feature type="glycosylation site" description="N-linked (GlcNAc...) asparagine" evidence="4">
    <location>
        <position position="220"/>
    </location>
</feature>
<feature type="glycosylation site" description="N-linked (GlcNAc...) asparagine" evidence="4">
    <location>
        <position position="255"/>
    </location>
</feature>
<feature type="glycosylation site" description="N-linked (GlcNAc...) asparagine" evidence="4">
    <location>
        <position position="260"/>
    </location>
</feature>
<feature type="glycosylation site" description="N-linked (GlcNAc...) asparagine" evidence="4">
    <location>
        <position position="292"/>
    </location>
</feature>
<feature type="glycosylation site" description="N-linked (GlcNAc...) asparagine" evidence="4">
    <location>
        <position position="313"/>
    </location>
</feature>
<feature type="glycosylation site" description="N-linked (GlcNAc...) asparagine" evidence="4">
    <location>
        <position position="324"/>
    </location>
</feature>
<feature type="glycosylation site" description="N-linked (GlcNAc...) asparagine" evidence="4">
    <location>
        <position position="349"/>
    </location>
</feature>
<feature type="glycosylation site" description="N-linked (GlcNAc...) asparagine" evidence="4">
    <location>
        <position position="418"/>
    </location>
</feature>
<feature type="glycosylation site" description="N-linked (GlcNAc...) asparagine" evidence="4">
    <location>
        <position position="429"/>
    </location>
</feature>
<feature type="glycosylation site" description="N-linked (GlcNAc...) asparagine" evidence="4">
    <location>
        <position position="459"/>
    </location>
</feature>
<feature type="glycosylation site" description="N-linked (GlcNAc...) asparagine" evidence="4">
    <location>
        <position position="491"/>
    </location>
</feature>
<feature type="splice variant" id="VSP_059410" description="In isoform 3.">
    <location>
        <begin position="33"/>
        <end position="171"/>
    </location>
</feature>
<feature type="splice variant" id="VSP_059411" description="In isoform 2.">
    <location>
        <begin position="33"/>
        <end position="75"/>
    </location>
</feature>
<feature type="sequence conflict" description="In Ref. 3; AAA39459." evidence="11" ref="3">
    <original>K</original>
    <variation>E</variation>
    <location>
        <position position="302"/>
    </location>
</feature>
<feature type="sequence conflict" description="In Ref. 3; AAA39459." evidence="11" ref="3">
    <original>VSKPES</original>
    <variation>ASKPDP</variation>
    <location>
        <begin position="400"/>
        <end position="405"/>
    </location>
</feature>
<feature type="sequence conflict" description="In Ref. 3; AAA39459." evidence="11" ref="3">
    <original>N</original>
    <variation>T</variation>
    <location>
        <position position="478"/>
    </location>
</feature>
<feature type="sequence conflict" description="In Ref. 1; AAA39458." evidence="11" ref="1">
    <original>V</original>
    <variation>G</variation>
    <location>
        <position position="530"/>
    </location>
</feature>
<feature type="sequence conflict" description="In Ref. 1; AAA39458." evidence="11" ref="1">
    <original>N</original>
    <variation>S</variation>
    <location>
        <position position="558"/>
    </location>
</feature>
<feature type="sequence conflict" description="In Ref. 1; AAA39458." evidence="11" ref="1">
    <original>I</original>
    <variation>S</variation>
    <location>
        <position position="590"/>
    </location>
</feature>
<feature type="sequence conflict" description="In Ref. 1; AAA39458." evidence="11" ref="1">
    <original>E</original>
    <variation>Q</variation>
    <location>
        <position position="908"/>
    </location>
</feature>
<feature type="sequence conflict" description="In Ref. 1; AAA39458." evidence="11" ref="1">
    <original>L</original>
    <variation>R</variation>
    <location>
        <position position="933"/>
    </location>
</feature>
<feature type="sequence conflict" description="In Ref. 1; AAA39458." evidence="11" ref="1">
    <original>E</original>
    <variation>G</variation>
    <location>
        <position position="955"/>
    </location>
</feature>
<feature type="sequence conflict" description="In Ref. 1; AAA39458." evidence="11" ref="1">
    <original>N</original>
    <variation>K</variation>
    <location>
        <position position="961"/>
    </location>
</feature>
<feature type="sequence conflict" description="In Ref. 12; AAA40161." evidence="11" ref="12">
    <original>VVPY</original>
    <variation>CSID</variation>
    <location>
        <begin position="966"/>
        <end position="969"/>
    </location>
</feature>
<comment type="function">
    <text evidence="1 3 9">Protein tyrosine-protein phosphatase required for T-cell activation through the antigen receptor. Acts as a positive regulator of T-cell coactivation upon binding to DPP4. The first PTPase domain has enzymatic activity, while the second one seems to affect the substrate specificity of the first one. Upon T-cell activation, recruits and dephosphorylates SKAP1 and FYN (By similarity). Dephosphorylates LYN, and thereby modulates LYN activity. Interacts with CLEC10A at antigen presenting cell-T cell contact; CLEC10A on immature dendritic cells recognizes Tn antigen-carrying PTPRC/CD45 receptor on effector T cells and modulates T cell activation threshold to limit autoreactivity.</text>
</comment>
<comment type="catalytic activity">
    <reaction evidence="7">
        <text>O-phospho-L-tyrosyl-[protein] + H2O = L-tyrosyl-[protein] + phosphate</text>
        <dbReference type="Rhea" id="RHEA:10684"/>
        <dbReference type="Rhea" id="RHEA-COMP:10136"/>
        <dbReference type="Rhea" id="RHEA-COMP:20101"/>
        <dbReference type="ChEBI" id="CHEBI:15377"/>
        <dbReference type="ChEBI" id="CHEBI:43474"/>
        <dbReference type="ChEBI" id="CHEBI:46858"/>
        <dbReference type="ChEBI" id="CHEBI:61978"/>
        <dbReference type="EC" id="3.1.3.48"/>
    </reaction>
</comment>
<comment type="subunit">
    <text evidence="3 10">Interacts with SKAP1. Interacts with DPP4; the interaction is enhanced in an interleukin-12-dependent manner in activated lymphocytes (By similarity). Binds GANAB and PRKCSH. Interacts with CD53; this interaction stabilizes PTPRC on the membrane and is required for optimal phosphatase activity (By similarity). Interacts with CLEC10A.</text>
</comment>
<comment type="interaction">
    <interactant intactId="EBI-1672">
        <id>P06800</id>
    </interactant>
    <interactant intactId="EBI-1401">
        <id>P06240</id>
        <label>Lck</label>
    </interactant>
    <organismsDiffer>false</organismsDiffer>
    <experiments>2</experiments>
</comment>
<comment type="subcellular location">
    <subcellularLocation>
        <location evidence="3">Cell membrane</location>
        <topology evidence="4">Single-pass type I membrane protein</topology>
    </subcellularLocation>
    <subcellularLocation>
        <location evidence="3">Membrane raft</location>
    </subcellularLocation>
    <subcellularLocation>
        <location evidence="3">Synapse</location>
    </subcellularLocation>
    <text evidence="3">Colocalized with DPP4 in membrane rafts.</text>
</comment>
<comment type="alternative products">
    <event type="alternative splicing"/>
    <isoform>
        <id>P06800-4</id>
        <name>1</name>
        <sequence type="displayed"/>
    </isoform>
    <isoform>
        <id>P06800-5</id>
        <name>2</name>
        <sequence type="described" ref="VSP_059411"/>
    </isoform>
    <isoform>
        <id>P06800-6</id>
        <name>3</name>
        <sequence type="described" ref="VSP_059410"/>
    </isoform>
</comment>
<comment type="developmental stage">
    <text>Expression is restricted to the hematopoietic compartment of development.</text>
</comment>
<comment type="domain">
    <text evidence="1">The first PTPase domain interacts with SKAP1.</text>
</comment>
<comment type="PTM">
    <text>Heavily N- and O-glycosylated.</text>
</comment>
<comment type="similarity">
    <text evidence="11">Belongs to the protein-tyrosine phosphatase family. Receptor class 1/6 subfamily.</text>
</comment>
<comment type="caution">
    <text evidence="11">It is uncertain whether Met-1 or Met-3 is the initiator.</text>
</comment>
<comment type="sequence caution" evidence="11">
    <conflict type="erroneous initiation">
        <sequence resource="EMBL-CDS" id="AAA39458"/>
    </conflict>
    <text>Truncated N-terminus.</text>
</comment>
<comment type="sequence caution" evidence="11">
    <conflict type="erroneous initiation">
        <sequence resource="EMBL-CDS" id="AAA39459"/>
    </conflict>
    <text>Truncated N-terminus.</text>
</comment>
<comment type="sequence caution" evidence="11">
    <conflict type="frameshift">
        <sequence resource="EMBL-CDS" id="AAA40161"/>
    </conflict>
</comment>
<comment type="sequence caution" evidence="11">
    <conflict type="miscellaneous discrepancy">
        <sequence resource="EMBL-CDS" id="AAA40161"/>
    </conflict>
    <text>Contaminating sequence. Sequence of unknown origin in the N-terminal part.</text>
</comment>
<comment type="sequence caution" evidence="11">
    <conflict type="erroneous initiation">
        <sequence resource="EMBL-CDS" id="AAA60449"/>
    </conflict>
    <text>Truncated N-terminus.</text>
</comment>
<comment type="sequence caution" evidence="11">
    <conflict type="erroneous initiation">
        <sequence resource="EMBL-CDS" id="AAB46374"/>
    </conflict>
    <text>Truncated N-terminus.</text>
</comment>
<name>PTPRC_MOUSE</name>